<sequence>MVYFYESKPTEYSTPYQIVMGKDKFENDLLIKWSYRELNYVWFHADKYSSGHVYLKLRPNEKTIDDIPQEVICDCLQLCKSESIQGNKMPQCTILITPWHNLRKNRYMNPGEVSFKSLRQCRKMECGARDNKILNRLAKTRVELFNNVEATLNEAKKTKNGDFFVNYIESNRSNLIEEEKLRKVAKKNQKKKNKQSKDEVTDDMQLEV</sequence>
<organism>
    <name type="scientific">Saccharomyces cerevisiae (strain ATCC 204508 / S288c)</name>
    <name type="common">Baker's yeast</name>
    <dbReference type="NCBI Taxonomy" id="559292"/>
    <lineage>
        <taxon>Eukaryota</taxon>
        <taxon>Fungi</taxon>
        <taxon>Dikarya</taxon>
        <taxon>Ascomycota</taxon>
        <taxon>Saccharomycotina</taxon>
        <taxon>Saccharomycetes</taxon>
        <taxon>Saccharomycetales</taxon>
        <taxon>Saccharomycetaceae</taxon>
        <taxon>Saccharomyces</taxon>
    </lineage>
</organism>
<proteinExistence type="evidence at protein level"/>
<reference key="1">
    <citation type="journal article" date="1997" name="Nature">
        <title>The nucleotide sequence of Saccharomyces cerevisiae chromosome XIII.</title>
        <authorList>
            <person name="Bowman S."/>
            <person name="Churcher C.M."/>
            <person name="Badcock K."/>
            <person name="Brown D."/>
            <person name="Chillingworth T."/>
            <person name="Connor R."/>
            <person name="Dedman K."/>
            <person name="Devlin K."/>
            <person name="Gentles S."/>
            <person name="Hamlin N."/>
            <person name="Hunt S."/>
            <person name="Jagels K."/>
            <person name="Lye G."/>
            <person name="Moule S."/>
            <person name="Odell C."/>
            <person name="Pearson D."/>
            <person name="Rajandream M.A."/>
            <person name="Rice P."/>
            <person name="Skelton J."/>
            <person name="Walsh S.V."/>
            <person name="Whitehead S."/>
            <person name="Barrell B.G."/>
        </authorList>
    </citation>
    <scope>NUCLEOTIDE SEQUENCE [LARGE SCALE GENOMIC DNA]</scope>
    <source>
        <strain>ATCC 204508 / S288c</strain>
    </source>
</reference>
<reference key="2">
    <citation type="journal article" date="2014" name="G3 (Bethesda)">
        <title>The reference genome sequence of Saccharomyces cerevisiae: Then and now.</title>
        <authorList>
            <person name="Engel S.R."/>
            <person name="Dietrich F.S."/>
            <person name="Fisk D.G."/>
            <person name="Binkley G."/>
            <person name="Balakrishnan R."/>
            <person name="Costanzo M.C."/>
            <person name="Dwight S.S."/>
            <person name="Hitz B.C."/>
            <person name="Karra K."/>
            <person name="Nash R.S."/>
            <person name="Weng S."/>
            <person name="Wong E.D."/>
            <person name="Lloyd P."/>
            <person name="Skrzypek M.S."/>
            <person name="Miyasato S.R."/>
            <person name="Simison M."/>
            <person name="Cherry J.M."/>
        </authorList>
    </citation>
    <scope>GENOME REANNOTATION</scope>
    <source>
        <strain>ATCC 204508 / S288c</strain>
    </source>
</reference>
<reference key="3">
    <citation type="journal article" date="2003" name="Nature">
        <title>Global analysis of protein localization in budding yeast.</title>
        <authorList>
            <person name="Huh W.-K."/>
            <person name="Falvo J.V."/>
            <person name="Gerke L.C."/>
            <person name="Carroll A.S."/>
            <person name="Howson R.W."/>
            <person name="Weissman J.S."/>
            <person name="O'Shea E.K."/>
        </authorList>
    </citation>
    <scope>SUBCELLULAR LOCATION [LARGE SCALE ANALYSIS]</scope>
</reference>
<reference key="4">
    <citation type="journal article" date="2003" name="Nature">
        <title>Global analysis of protein expression in yeast.</title>
        <authorList>
            <person name="Ghaemmaghami S."/>
            <person name="Huh W.-K."/>
            <person name="Bower K."/>
            <person name="Howson R.W."/>
            <person name="Belle A."/>
            <person name="Dephoure N."/>
            <person name="O'Shea E.K."/>
            <person name="Weissman J.S."/>
        </authorList>
    </citation>
    <scope>LEVEL OF PROTEIN EXPRESSION [LARGE SCALE ANALYSIS]</scope>
</reference>
<reference key="5">
    <citation type="journal article" date="2004" name="EMBO Rep.">
        <title>The J-protein family: modulating protein assembly, disassembly and translocation.</title>
        <authorList>
            <person name="Walsh P."/>
            <person name="Bursac D."/>
            <person name="Law Y.C."/>
            <person name="Cyr D."/>
            <person name="Lithgow T."/>
        </authorList>
    </citation>
    <scope>GENE NAME</scope>
</reference>
<keyword id="KW-0963">Cytoplasm</keyword>
<keyword id="KW-1185">Reference proteome</keyword>
<accession>P40206</accession>
<accession>D6VZV5</accession>
<feature type="chain" id="PRO_0000203301" description="Protein JLP2">
    <location>
        <begin position="1"/>
        <end position="208"/>
    </location>
</feature>
<feature type="region of interest" description="Disordered" evidence="1">
    <location>
        <begin position="185"/>
        <end position="208"/>
    </location>
</feature>
<feature type="compositionally biased region" description="Basic residues" evidence="1">
    <location>
        <begin position="185"/>
        <end position="194"/>
    </location>
</feature>
<protein>
    <recommendedName>
        <fullName>Protein JLP2</fullName>
    </recommendedName>
    <alternativeName>
        <fullName>DnaJ-like protein 2</fullName>
    </alternativeName>
</protein>
<dbReference type="EMBL" id="Z47071">
    <property type="protein sequence ID" value="CAA87346.1"/>
    <property type="molecule type" value="Genomic_DNA"/>
</dbReference>
<dbReference type="EMBL" id="Z48622">
    <property type="status" value="NOT_ANNOTATED_CDS"/>
    <property type="molecule type" value="Genomic_DNA"/>
</dbReference>
<dbReference type="EMBL" id="BK006946">
    <property type="protein sequence ID" value="DAA10029.1"/>
    <property type="molecule type" value="Genomic_DNA"/>
</dbReference>
<dbReference type="PIR" id="S50388">
    <property type="entry name" value="S50388"/>
</dbReference>
<dbReference type="RefSeq" id="NP_013851.1">
    <property type="nucleotide sequence ID" value="NM_001182633.1"/>
</dbReference>
<dbReference type="SMR" id="P40206"/>
<dbReference type="BioGRID" id="35309">
    <property type="interactions" value="50"/>
</dbReference>
<dbReference type="DIP" id="DIP-8261N"/>
<dbReference type="FunCoup" id="P40206">
    <property type="interactions" value="611"/>
</dbReference>
<dbReference type="IntAct" id="P40206">
    <property type="interactions" value="1"/>
</dbReference>
<dbReference type="STRING" id="4932.YMR132C"/>
<dbReference type="PaxDb" id="4932-YMR132C"/>
<dbReference type="PeptideAtlas" id="P40206"/>
<dbReference type="EnsemblFungi" id="YMR132C_mRNA">
    <property type="protein sequence ID" value="YMR132C"/>
    <property type="gene ID" value="YMR132C"/>
</dbReference>
<dbReference type="GeneID" id="855162"/>
<dbReference type="KEGG" id="sce:YMR132C"/>
<dbReference type="AGR" id="SGD:S000004739"/>
<dbReference type="SGD" id="S000004739">
    <property type="gene designation" value="JLP2"/>
</dbReference>
<dbReference type="VEuPathDB" id="FungiDB:YMR132C"/>
<dbReference type="eggNOG" id="KOG3272">
    <property type="taxonomic scope" value="Eukaryota"/>
</dbReference>
<dbReference type="GeneTree" id="ENSGT00390000004380"/>
<dbReference type="HOGENOM" id="CLU_076656_1_0_1"/>
<dbReference type="InParanoid" id="P40206"/>
<dbReference type="OMA" id="YHDEKAV"/>
<dbReference type="OrthoDB" id="200398at2759"/>
<dbReference type="BioCyc" id="YEAST:G3O-32825-MONOMER"/>
<dbReference type="BioGRID-ORCS" id="855162">
    <property type="hits" value="0 hits in 10 CRISPR screens"/>
</dbReference>
<dbReference type="PRO" id="PR:P40206"/>
<dbReference type="Proteomes" id="UP000002311">
    <property type="component" value="Chromosome XIII"/>
</dbReference>
<dbReference type="RNAct" id="P40206">
    <property type="molecule type" value="protein"/>
</dbReference>
<dbReference type="GO" id="GO:0005737">
    <property type="term" value="C:cytoplasm"/>
    <property type="evidence" value="ECO:0007005"/>
    <property type="project" value="SGD"/>
</dbReference>
<dbReference type="InterPro" id="IPR039730">
    <property type="entry name" value="Jlp2/Ccd25"/>
</dbReference>
<dbReference type="InterPro" id="IPR008532">
    <property type="entry name" value="NFACT_RNA-bd"/>
</dbReference>
<dbReference type="PANTHER" id="PTHR13049:SF2">
    <property type="entry name" value="COILED-COIL DOMAIN-CONTAINING PROTEIN 25"/>
    <property type="match status" value="1"/>
</dbReference>
<dbReference type="PANTHER" id="PTHR13049">
    <property type="entry name" value="DUF814-RELATED"/>
    <property type="match status" value="1"/>
</dbReference>
<dbReference type="Pfam" id="PF05670">
    <property type="entry name" value="NFACT-R_1"/>
    <property type="match status" value="1"/>
</dbReference>
<evidence type="ECO:0000256" key="1">
    <source>
        <dbReference type="SAM" id="MobiDB-lite"/>
    </source>
</evidence>
<evidence type="ECO:0000269" key="2">
    <source>
    </source>
</evidence>
<evidence type="ECO:0000269" key="3">
    <source>
    </source>
</evidence>
<evidence type="ECO:0000305" key="4"/>
<gene>
    <name type="primary">JLP2</name>
    <name type="ordered locus">YMR132C</name>
    <name type="ORF">YM9375.01C</name>
</gene>
<comment type="subcellular location">
    <subcellularLocation>
        <location evidence="2">Cytoplasm</location>
    </subcellularLocation>
</comment>
<comment type="miscellaneous">
    <text evidence="3">Present with 3060 molecules/cell in log phase SD medium.</text>
</comment>
<comment type="similarity">
    <text evidence="4">Belongs to the CCDC25 family.</text>
</comment>
<name>JLP2_YEAST</name>